<keyword id="KW-0238">DNA-binding</keyword>
<keyword id="KW-0539">Nucleus</keyword>
<keyword id="KW-1185">Reference proteome</keyword>
<keyword id="KW-0804">Transcription</keyword>
<keyword id="KW-0805">Transcription regulation</keyword>
<proteinExistence type="evidence at transcript level"/>
<feature type="chain" id="PRO_0000376945" description="B3 domain-containing protein LOC_Os02g10420">
    <location>
        <begin position="1"/>
        <end position="110"/>
    </location>
</feature>
<feature type="DNA-binding region" description="TF-B3" evidence="1">
    <location>
        <begin position="1"/>
        <end position="104"/>
    </location>
</feature>
<organism>
    <name type="scientific">Oryza sativa subsp. japonica</name>
    <name type="common">Rice</name>
    <dbReference type="NCBI Taxonomy" id="39947"/>
    <lineage>
        <taxon>Eukaryota</taxon>
        <taxon>Viridiplantae</taxon>
        <taxon>Streptophyta</taxon>
        <taxon>Embryophyta</taxon>
        <taxon>Tracheophyta</taxon>
        <taxon>Spermatophyta</taxon>
        <taxon>Magnoliopsida</taxon>
        <taxon>Liliopsida</taxon>
        <taxon>Poales</taxon>
        <taxon>Poaceae</taxon>
        <taxon>BOP clade</taxon>
        <taxon>Oryzoideae</taxon>
        <taxon>Oryzeae</taxon>
        <taxon>Oryzinae</taxon>
        <taxon>Oryza</taxon>
        <taxon>Oryza sativa</taxon>
    </lineage>
</organism>
<protein>
    <recommendedName>
        <fullName>B3 domain-containing protein LOC_Os02g10420</fullName>
    </recommendedName>
</protein>
<sequence>MSAMLNENVPVEFQEAHGYAAREKVVLRMRGRSWTVRLKHTKGRRPRRERAVLRYGWHRFCADNGLAVGDTCFFRALRSAGSGAGDVDDGDGDHVLSVTVHKADGGDPLE</sequence>
<dbReference type="EMBL" id="AP004191">
    <property type="protein sequence ID" value="BAD25288.1"/>
    <property type="status" value="ALT_SEQ"/>
    <property type="molecule type" value="Genomic_DNA"/>
</dbReference>
<dbReference type="EMBL" id="AP004812">
    <property type="protein sequence ID" value="BAD25455.1"/>
    <property type="status" value="ALT_SEQ"/>
    <property type="molecule type" value="Genomic_DNA"/>
</dbReference>
<dbReference type="EMBL" id="AP014958">
    <property type="status" value="NOT_ANNOTATED_CDS"/>
    <property type="molecule type" value="Genomic_DNA"/>
</dbReference>
<dbReference type="EMBL" id="CM000139">
    <property type="protein sequence ID" value="EAZ22102.1"/>
    <property type="molecule type" value="Genomic_DNA"/>
</dbReference>
<dbReference type="RefSeq" id="XP_015624348.1">
    <property type="nucleotide sequence ID" value="XM_015768862.1"/>
</dbReference>
<dbReference type="SMR" id="A3A463"/>
<dbReference type="FunCoup" id="A3A463">
    <property type="interactions" value="15"/>
</dbReference>
<dbReference type="STRING" id="39947.A3A463"/>
<dbReference type="PaxDb" id="39947-A3A463"/>
<dbReference type="HOGENOM" id="CLU_138225_0_0_1"/>
<dbReference type="InParanoid" id="A3A463"/>
<dbReference type="Proteomes" id="UP000000763">
    <property type="component" value="Chromosome 2"/>
</dbReference>
<dbReference type="Proteomes" id="UP000007752">
    <property type="component" value="Chromosome 2"/>
</dbReference>
<dbReference type="Proteomes" id="UP000059680">
    <property type="component" value="Chromosome 2"/>
</dbReference>
<dbReference type="GO" id="GO:0005634">
    <property type="term" value="C:nucleus"/>
    <property type="evidence" value="ECO:0007669"/>
    <property type="project" value="UniProtKB-SubCell"/>
</dbReference>
<dbReference type="GO" id="GO:0003677">
    <property type="term" value="F:DNA binding"/>
    <property type="evidence" value="ECO:0007669"/>
    <property type="project" value="UniProtKB-KW"/>
</dbReference>
<dbReference type="CDD" id="cd10017">
    <property type="entry name" value="B3_DNA"/>
    <property type="match status" value="1"/>
</dbReference>
<dbReference type="Gene3D" id="2.40.330.10">
    <property type="entry name" value="DNA-binding pseudobarrel domain"/>
    <property type="match status" value="1"/>
</dbReference>
<dbReference type="InterPro" id="IPR003340">
    <property type="entry name" value="B3_DNA-bd"/>
</dbReference>
<dbReference type="InterPro" id="IPR015300">
    <property type="entry name" value="DNA-bd_pseudobarrel_sf"/>
</dbReference>
<dbReference type="InterPro" id="IPR039218">
    <property type="entry name" value="REM_fam"/>
</dbReference>
<dbReference type="PANTHER" id="PTHR31674:SF95">
    <property type="entry name" value="B3 DOMAIN-CONTAINING PROTEIN OS03G0212300"/>
    <property type="match status" value="1"/>
</dbReference>
<dbReference type="PANTHER" id="PTHR31674">
    <property type="entry name" value="B3 DOMAIN-CONTAINING PROTEIN REM-LIKE 3-RELATED"/>
    <property type="match status" value="1"/>
</dbReference>
<dbReference type="Pfam" id="PF02362">
    <property type="entry name" value="B3"/>
    <property type="match status" value="1"/>
</dbReference>
<dbReference type="SMART" id="SM01019">
    <property type="entry name" value="B3"/>
    <property type="match status" value="1"/>
</dbReference>
<dbReference type="SUPFAM" id="SSF101936">
    <property type="entry name" value="DNA-binding pseudobarrel domain"/>
    <property type="match status" value="1"/>
</dbReference>
<dbReference type="PROSITE" id="PS50863">
    <property type="entry name" value="B3"/>
    <property type="match status" value="1"/>
</dbReference>
<reference key="1">
    <citation type="journal article" date="2005" name="Nature">
        <title>The map-based sequence of the rice genome.</title>
        <authorList>
            <consortium name="International rice genome sequencing project (IRGSP)"/>
        </authorList>
    </citation>
    <scope>NUCLEOTIDE SEQUENCE [LARGE SCALE GENOMIC DNA]</scope>
    <source>
        <strain>cv. Nipponbare</strain>
    </source>
</reference>
<reference key="2">
    <citation type="journal article" date="2013" name="Rice">
        <title>Improvement of the Oryza sativa Nipponbare reference genome using next generation sequence and optical map data.</title>
        <authorList>
            <person name="Kawahara Y."/>
            <person name="de la Bastide M."/>
            <person name="Hamilton J.P."/>
            <person name="Kanamori H."/>
            <person name="McCombie W.R."/>
            <person name="Ouyang S."/>
            <person name="Schwartz D.C."/>
            <person name="Tanaka T."/>
            <person name="Wu J."/>
            <person name="Zhou S."/>
            <person name="Childs K.L."/>
            <person name="Davidson R.M."/>
            <person name="Lin H."/>
            <person name="Quesada-Ocampo L."/>
            <person name="Vaillancourt B."/>
            <person name="Sakai H."/>
            <person name="Lee S.S."/>
            <person name="Kim J."/>
            <person name="Numa H."/>
            <person name="Itoh T."/>
            <person name="Buell C.R."/>
            <person name="Matsumoto T."/>
        </authorList>
    </citation>
    <scope>GENOME REANNOTATION</scope>
    <source>
        <strain>cv. Nipponbare</strain>
    </source>
</reference>
<reference key="3">
    <citation type="journal article" date="2005" name="PLoS Biol.">
        <title>The genomes of Oryza sativa: a history of duplications.</title>
        <authorList>
            <person name="Yu J."/>
            <person name="Wang J."/>
            <person name="Lin W."/>
            <person name="Li S."/>
            <person name="Li H."/>
            <person name="Zhou J."/>
            <person name="Ni P."/>
            <person name="Dong W."/>
            <person name="Hu S."/>
            <person name="Zeng C."/>
            <person name="Zhang J."/>
            <person name="Zhang Y."/>
            <person name="Li R."/>
            <person name="Xu Z."/>
            <person name="Li S."/>
            <person name="Li X."/>
            <person name="Zheng H."/>
            <person name="Cong L."/>
            <person name="Lin L."/>
            <person name="Yin J."/>
            <person name="Geng J."/>
            <person name="Li G."/>
            <person name="Shi J."/>
            <person name="Liu J."/>
            <person name="Lv H."/>
            <person name="Li J."/>
            <person name="Wang J."/>
            <person name="Deng Y."/>
            <person name="Ran L."/>
            <person name="Shi X."/>
            <person name="Wang X."/>
            <person name="Wu Q."/>
            <person name="Li C."/>
            <person name="Ren X."/>
            <person name="Wang J."/>
            <person name="Wang X."/>
            <person name="Li D."/>
            <person name="Liu D."/>
            <person name="Zhang X."/>
            <person name="Ji Z."/>
            <person name="Zhao W."/>
            <person name="Sun Y."/>
            <person name="Zhang Z."/>
            <person name="Bao J."/>
            <person name="Han Y."/>
            <person name="Dong L."/>
            <person name="Ji J."/>
            <person name="Chen P."/>
            <person name="Wu S."/>
            <person name="Liu J."/>
            <person name="Xiao Y."/>
            <person name="Bu D."/>
            <person name="Tan J."/>
            <person name="Yang L."/>
            <person name="Ye C."/>
            <person name="Zhang J."/>
            <person name="Xu J."/>
            <person name="Zhou Y."/>
            <person name="Yu Y."/>
            <person name="Zhang B."/>
            <person name="Zhuang S."/>
            <person name="Wei H."/>
            <person name="Liu B."/>
            <person name="Lei M."/>
            <person name="Yu H."/>
            <person name="Li Y."/>
            <person name="Xu H."/>
            <person name="Wei S."/>
            <person name="He X."/>
            <person name="Fang L."/>
            <person name="Zhang Z."/>
            <person name="Zhang Y."/>
            <person name="Huang X."/>
            <person name="Su Z."/>
            <person name="Tong W."/>
            <person name="Li J."/>
            <person name="Tong Z."/>
            <person name="Li S."/>
            <person name="Ye J."/>
            <person name="Wang L."/>
            <person name="Fang L."/>
            <person name="Lei T."/>
            <person name="Chen C.-S."/>
            <person name="Chen H.-C."/>
            <person name="Xu Z."/>
            <person name="Li H."/>
            <person name="Huang H."/>
            <person name="Zhang F."/>
            <person name="Xu H."/>
            <person name="Li N."/>
            <person name="Zhao C."/>
            <person name="Li S."/>
            <person name="Dong L."/>
            <person name="Huang Y."/>
            <person name="Li L."/>
            <person name="Xi Y."/>
            <person name="Qi Q."/>
            <person name="Li W."/>
            <person name="Zhang B."/>
            <person name="Hu W."/>
            <person name="Zhang Y."/>
            <person name="Tian X."/>
            <person name="Jiao Y."/>
            <person name="Liang X."/>
            <person name="Jin J."/>
            <person name="Gao L."/>
            <person name="Zheng W."/>
            <person name="Hao B."/>
            <person name="Liu S.-M."/>
            <person name="Wang W."/>
            <person name="Yuan L."/>
            <person name="Cao M."/>
            <person name="McDermott J."/>
            <person name="Samudrala R."/>
            <person name="Wang J."/>
            <person name="Wong G.K.-S."/>
            <person name="Yang H."/>
        </authorList>
    </citation>
    <scope>NUCLEOTIDE SEQUENCE [LARGE SCALE GENOMIC DNA]</scope>
    <source>
        <strain>cv. Nipponbare</strain>
    </source>
</reference>
<gene>
    <name type="ordered locus">LOC_Os02g10420</name>
    <name type="ORF">OJ1524_D08.32</name>
    <name type="ORF">OsJ_05761</name>
    <name type="ORF">P0026H03.7</name>
</gene>
<comment type="subcellular location">
    <subcellularLocation>
        <location evidence="1">Nucleus</location>
    </subcellularLocation>
</comment>
<comment type="sequence caution" evidence="2">
    <conflict type="erroneous gene model prediction">
        <sequence resource="EMBL-CDS" id="BAD25288"/>
    </conflict>
</comment>
<comment type="sequence caution" evidence="2">
    <conflict type="erroneous gene model prediction">
        <sequence resource="EMBL-CDS" id="BAD25455"/>
    </conflict>
</comment>
<name>Y2042_ORYSJ</name>
<evidence type="ECO:0000255" key="1">
    <source>
        <dbReference type="PROSITE-ProRule" id="PRU00326"/>
    </source>
</evidence>
<evidence type="ECO:0000305" key="2"/>
<accession>A3A463</accession>
<accession>Q6H744</accession>